<feature type="chain" id="PRO_1000132448" description="Glycine dehydrogenase (decarboxylating)">
    <location>
        <begin position="1"/>
        <end position="954"/>
    </location>
</feature>
<feature type="modified residue" description="N6-(pyridoxal phosphate)lysine" evidence="1">
    <location>
        <position position="704"/>
    </location>
</feature>
<name>GCSP_RHIE6</name>
<comment type="function">
    <text evidence="1">The glycine cleavage system catalyzes the degradation of glycine. The P protein binds the alpha-amino group of glycine through its pyridoxal phosphate cofactor; CO(2) is released and the remaining methylamine moiety is then transferred to the lipoamide cofactor of the H protein.</text>
</comment>
<comment type="catalytic activity">
    <reaction evidence="1">
        <text>N(6)-[(R)-lipoyl]-L-lysyl-[glycine-cleavage complex H protein] + glycine + H(+) = N(6)-[(R)-S(8)-aminomethyldihydrolipoyl]-L-lysyl-[glycine-cleavage complex H protein] + CO2</text>
        <dbReference type="Rhea" id="RHEA:24304"/>
        <dbReference type="Rhea" id="RHEA-COMP:10494"/>
        <dbReference type="Rhea" id="RHEA-COMP:10495"/>
        <dbReference type="ChEBI" id="CHEBI:15378"/>
        <dbReference type="ChEBI" id="CHEBI:16526"/>
        <dbReference type="ChEBI" id="CHEBI:57305"/>
        <dbReference type="ChEBI" id="CHEBI:83099"/>
        <dbReference type="ChEBI" id="CHEBI:83143"/>
        <dbReference type="EC" id="1.4.4.2"/>
    </reaction>
</comment>
<comment type="cofactor">
    <cofactor evidence="1">
        <name>pyridoxal 5'-phosphate</name>
        <dbReference type="ChEBI" id="CHEBI:597326"/>
    </cofactor>
</comment>
<comment type="subunit">
    <text evidence="1">The glycine cleavage system is composed of four proteins: P, T, L and H.</text>
</comment>
<comment type="similarity">
    <text evidence="1">Belongs to the GcvP family.</text>
</comment>
<keyword id="KW-0560">Oxidoreductase</keyword>
<keyword id="KW-0663">Pyridoxal phosphate</keyword>
<accession>B3PP20</accession>
<dbReference type="EC" id="1.4.4.2" evidence="1"/>
<dbReference type="EMBL" id="CP001074">
    <property type="protein sequence ID" value="ACE91306.1"/>
    <property type="molecule type" value="Genomic_DNA"/>
</dbReference>
<dbReference type="SMR" id="B3PP20"/>
<dbReference type="KEGG" id="rec:RHECIAT_CH0002352"/>
<dbReference type="eggNOG" id="COG0403">
    <property type="taxonomic scope" value="Bacteria"/>
</dbReference>
<dbReference type="eggNOG" id="COG1003">
    <property type="taxonomic scope" value="Bacteria"/>
</dbReference>
<dbReference type="HOGENOM" id="CLU_004620_1_1_5"/>
<dbReference type="Proteomes" id="UP000008817">
    <property type="component" value="Chromosome"/>
</dbReference>
<dbReference type="GO" id="GO:0005829">
    <property type="term" value="C:cytosol"/>
    <property type="evidence" value="ECO:0007669"/>
    <property type="project" value="TreeGrafter"/>
</dbReference>
<dbReference type="GO" id="GO:0005960">
    <property type="term" value="C:glycine cleavage complex"/>
    <property type="evidence" value="ECO:0007669"/>
    <property type="project" value="TreeGrafter"/>
</dbReference>
<dbReference type="GO" id="GO:0016594">
    <property type="term" value="F:glycine binding"/>
    <property type="evidence" value="ECO:0007669"/>
    <property type="project" value="TreeGrafter"/>
</dbReference>
<dbReference type="GO" id="GO:0004375">
    <property type="term" value="F:glycine dehydrogenase (decarboxylating) activity"/>
    <property type="evidence" value="ECO:0007669"/>
    <property type="project" value="UniProtKB-EC"/>
</dbReference>
<dbReference type="GO" id="GO:0030170">
    <property type="term" value="F:pyridoxal phosphate binding"/>
    <property type="evidence" value="ECO:0007669"/>
    <property type="project" value="TreeGrafter"/>
</dbReference>
<dbReference type="GO" id="GO:0019464">
    <property type="term" value="P:glycine decarboxylation via glycine cleavage system"/>
    <property type="evidence" value="ECO:0007669"/>
    <property type="project" value="UniProtKB-UniRule"/>
</dbReference>
<dbReference type="CDD" id="cd00613">
    <property type="entry name" value="GDC-P"/>
    <property type="match status" value="2"/>
</dbReference>
<dbReference type="FunFam" id="3.40.640.10:FF:000005">
    <property type="entry name" value="Glycine dehydrogenase (decarboxylating), mitochondrial"/>
    <property type="match status" value="1"/>
</dbReference>
<dbReference type="FunFam" id="3.90.1150.10:FF:000007">
    <property type="entry name" value="Glycine dehydrogenase (decarboxylating), mitochondrial"/>
    <property type="match status" value="1"/>
</dbReference>
<dbReference type="FunFam" id="3.40.640.10:FF:000007">
    <property type="entry name" value="glycine dehydrogenase (Decarboxylating), mitochondrial"/>
    <property type="match status" value="1"/>
</dbReference>
<dbReference type="Gene3D" id="3.90.1150.10">
    <property type="entry name" value="Aspartate Aminotransferase, domain 1"/>
    <property type="match status" value="2"/>
</dbReference>
<dbReference type="Gene3D" id="3.40.640.10">
    <property type="entry name" value="Type I PLP-dependent aspartate aminotransferase-like (Major domain)"/>
    <property type="match status" value="2"/>
</dbReference>
<dbReference type="HAMAP" id="MF_00711">
    <property type="entry name" value="GcvP"/>
    <property type="match status" value="1"/>
</dbReference>
<dbReference type="InterPro" id="IPR003437">
    <property type="entry name" value="GcvP"/>
</dbReference>
<dbReference type="InterPro" id="IPR049316">
    <property type="entry name" value="GDC-P_C"/>
</dbReference>
<dbReference type="InterPro" id="IPR049315">
    <property type="entry name" value="GDC-P_N"/>
</dbReference>
<dbReference type="InterPro" id="IPR020581">
    <property type="entry name" value="GDC_P"/>
</dbReference>
<dbReference type="InterPro" id="IPR015424">
    <property type="entry name" value="PyrdxlP-dep_Trfase"/>
</dbReference>
<dbReference type="InterPro" id="IPR015421">
    <property type="entry name" value="PyrdxlP-dep_Trfase_major"/>
</dbReference>
<dbReference type="InterPro" id="IPR015422">
    <property type="entry name" value="PyrdxlP-dep_Trfase_small"/>
</dbReference>
<dbReference type="NCBIfam" id="TIGR00461">
    <property type="entry name" value="gcvP"/>
    <property type="match status" value="1"/>
</dbReference>
<dbReference type="NCBIfam" id="NF003346">
    <property type="entry name" value="PRK04366.1"/>
    <property type="match status" value="1"/>
</dbReference>
<dbReference type="PANTHER" id="PTHR11773:SF1">
    <property type="entry name" value="GLYCINE DEHYDROGENASE (DECARBOXYLATING), MITOCHONDRIAL"/>
    <property type="match status" value="1"/>
</dbReference>
<dbReference type="PANTHER" id="PTHR11773">
    <property type="entry name" value="GLYCINE DEHYDROGENASE, DECARBOXYLATING"/>
    <property type="match status" value="1"/>
</dbReference>
<dbReference type="Pfam" id="PF21478">
    <property type="entry name" value="GcvP2_C"/>
    <property type="match status" value="1"/>
</dbReference>
<dbReference type="Pfam" id="PF02347">
    <property type="entry name" value="GDC-P"/>
    <property type="match status" value="2"/>
</dbReference>
<dbReference type="SUPFAM" id="SSF53383">
    <property type="entry name" value="PLP-dependent transferases"/>
    <property type="match status" value="2"/>
</dbReference>
<evidence type="ECO:0000255" key="1">
    <source>
        <dbReference type="HAMAP-Rule" id="MF_00711"/>
    </source>
</evidence>
<sequence length="954" mass="103943">MTTPTEFQFTDYQPYDFANRRHIGPSPAEMTDMLKVIGFNSLDGLIDATLPPTIRQKAPLVWGAPMTEREALDKLRETANKNKVLVSLIGQGYYGTITPPVIQRNILENPAWYTAYTPYQPEISQGRLEALLNYQTMVCDLTGLDVANASLLDEATAAAEGMAMAERVSKSKAKAFFVDADCHPQTIALIRTRAEPLGWSVIVGNPFTDLDPVDVFGAIFQYPGTHGHVHDFTGLIARLHQAGAISVVAADILALTLLKSPGEMGADIAVGSSQRFGVPVGYGGPHAAYMAVKDAIKRSMPGRLVGVSVDARGNRAYRLSLQTREQHIRREKATSNICTAQVLLAVMASMYAVFHGPDGIKAIAQQVHQKAVLMAKGLEKLGYKVEPESFFDTITVDVGHMQGLILRAAVAEGVNLRKVGETKIGMSLDERTRPATLEAVWRAFGGNFTIADFEPSYLLPKGLLRTTDYLAHPIFHMNRAESEMTRYIRRLSDRDLALDRSMIPLGSCTMKLNATAEMLPITWPEFSDIHPFVPADQALGYREMLDDLTEKLCAVTGYDAFSMQPNSGAQGEYAGLLTIRNYHIANGEGHRDVCLIPTSAHGTNPASAQMVGMKVVVVKVRENGDIDLDDFRTKAEEHAASLSCCMITYPSTHGVFEETVKEICELVHKHGGQVYLDGANMNAMVGLSRPGDIGSDVSHLNLHKTFCIPHGGGGPGMGPIGVKAHLAPHLPGHPETDGRPGAVSAAAFGSASILPISWSYCLMMGGEGLTQATKVAILNANYIAARLKGAYDVLYKSKTGRVAHECIIDTRPLVDSSGVTVDDVAKRLIDCGFHAPTMSWPVSGTLMIEPTESETKAELDRFCEAMLAIREEARAIEDGRMDKINNPLKNAPHTVEDLVGEWDRPYSREQACFPPGAFRVDKYWSPVNRVDNVYGDRNLICTCPPVESYAEAAE</sequence>
<reference key="1">
    <citation type="journal article" date="2010" name="Appl. Environ. Microbiol.">
        <title>Conserved symbiotic plasmid DNA sequences in the multireplicon pangenomic structure of Rhizobium etli.</title>
        <authorList>
            <person name="Gonzalez V."/>
            <person name="Acosta J.L."/>
            <person name="Santamaria R.I."/>
            <person name="Bustos P."/>
            <person name="Fernandez J.L."/>
            <person name="Hernandez Gonzalez I.L."/>
            <person name="Diaz R."/>
            <person name="Flores M."/>
            <person name="Palacios R."/>
            <person name="Mora J."/>
            <person name="Davila G."/>
        </authorList>
    </citation>
    <scope>NUCLEOTIDE SEQUENCE [LARGE SCALE GENOMIC DNA]</scope>
    <source>
        <strain>CIAT 652</strain>
    </source>
</reference>
<proteinExistence type="inferred from homology"/>
<protein>
    <recommendedName>
        <fullName evidence="1">Glycine dehydrogenase (decarboxylating)</fullName>
        <ecNumber evidence="1">1.4.4.2</ecNumber>
    </recommendedName>
    <alternativeName>
        <fullName evidence="1">Glycine cleavage system P-protein</fullName>
    </alternativeName>
    <alternativeName>
        <fullName evidence="1">Glycine decarboxylase</fullName>
    </alternativeName>
    <alternativeName>
        <fullName evidence="1">Glycine dehydrogenase (aminomethyl-transferring)</fullName>
    </alternativeName>
</protein>
<gene>
    <name evidence="1" type="primary">gcvP</name>
    <name type="ordered locus">RHECIAT_CH0002352</name>
</gene>
<organism>
    <name type="scientific">Rhizobium etli (strain CIAT 652)</name>
    <dbReference type="NCBI Taxonomy" id="491916"/>
    <lineage>
        <taxon>Bacteria</taxon>
        <taxon>Pseudomonadati</taxon>
        <taxon>Pseudomonadota</taxon>
        <taxon>Alphaproteobacteria</taxon>
        <taxon>Hyphomicrobiales</taxon>
        <taxon>Rhizobiaceae</taxon>
        <taxon>Rhizobium/Agrobacterium group</taxon>
        <taxon>Rhizobium</taxon>
    </lineage>
</organism>